<reference key="1">
    <citation type="submission" date="2008-10" db="EMBL/GenBank/DDBJ databases">
        <title>Cloning and sequencing of the full-length canine beta-catenin cDNA.</title>
        <authorList>
            <person name="Han J.-I."/>
            <person name="Na K.-J."/>
        </authorList>
    </citation>
    <scope>NUCLEOTIDE SEQUENCE [MRNA]</scope>
</reference>
<reference key="2">
    <citation type="journal article" date="2005" name="Nature">
        <title>Genome sequence, comparative analysis and haplotype structure of the domestic dog.</title>
        <authorList>
            <person name="Lindblad-Toh K."/>
            <person name="Wade C.M."/>
            <person name="Mikkelsen T.S."/>
            <person name="Karlsson E.K."/>
            <person name="Jaffe D.B."/>
            <person name="Kamal M."/>
            <person name="Clamp M."/>
            <person name="Chang J.L."/>
            <person name="Kulbokas E.J. III"/>
            <person name="Zody M.C."/>
            <person name="Mauceli E."/>
            <person name="Xie X."/>
            <person name="Breen M."/>
            <person name="Wayne R.K."/>
            <person name="Ostrander E.A."/>
            <person name="Ponting C.P."/>
            <person name="Galibert F."/>
            <person name="Smith D.R."/>
            <person name="deJong P.J."/>
            <person name="Kirkness E.F."/>
            <person name="Alvarez P."/>
            <person name="Biagi T."/>
            <person name="Brockman W."/>
            <person name="Butler J."/>
            <person name="Chin C.-W."/>
            <person name="Cook A."/>
            <person name="Cuff J."/>
            <person name="Daly M.J."/>
            <person name="DeCaprio D."/>
            <person name="Gnerre S."/>
            <person name="Grabherr M."/>
            <person name="Kellis M."/>
            <person name="Kleber M."/>
            <person name="Bardeleben C."/>
            <person name="Goodstadt L."/>
            <person name="Heger A."/>
            <person name="Hitte C."/>
            <person name="Kim L."/>
            <person name="Koepfli K.-P."/>
            <person name="Parker H.G."/>
            <person name="Pollinger J.P."/>
            <person name="Searle S.M.J."/>
            <person name="Sutter N.B."/>
            <person name="Thomas R."/>
            <person name="Webber C."/>
            <person name="Baldwin J."/>
            <person name="Abebe A."/>
            <person name="Abouelleil A."/>
            <person name="Aftuck L."/>
            <person name="Ait-Zahra M."/>
            <person name="Aldredge T."/>
            <person name="Allen N."/>
            <person name="An P."/>
            <person name="Anderson S."/>
            <person name="Antoine C."/>
            <person name="Arachchi H."/>
            <person name="Aslam A."/>
            <person name="Ayotte L."/>
            <person name="Bachantsang P."/>
            <person name="Barry A."/>
            <person name="Bayul T."/>
            <person name="Benamara M."/>
            <person name="Berlin A."/>
            <person name="Bessette D."/>
            <person name="Blitshteyn B."/>
            <person name="Bloom T."/>
            <person name="Blye J."/>
            <person name="Boguslavskiy L."/>
            <person name="Bonnet C."/>
            <person name="Boukhgalter B."/>
            <person name="Brown A."/>
            <person name="Cahill P."/>
            <person name="Calixte N."/>
            <person name="Camarata J."/>
            <person name="Cheshatsang Y."/>
            <person name="Chu J."/>
            <person name="Citroen M."/>
            <person name="Collymore A."/>
            <person name="Cooke P."/>
            <person name="Dawoe T."/>
            <person name="Daza R."/>
            <person name="Decktor K."/>
            <person name="DeGray S."/>
            <person name="Dhargay N."/>
            <person name="Dooley K."/>
            <person name="Dooley K."/>
            <person name="Dorje P."/>
            <person name="Dorjee K."/>
            <person name="Dorris L."/>
            <person name="Duffey N."/>
            <person name="Dupes A."/>
            <person name="Egbiremolen O."/>
            <person name="Elong R."/>
            <person name="Falk J."/>
            <person name="Farina A."/>
            <person name="Faro S."/>
            <person name="Ferguson D."/>
            <person name="Ferreira P."/>
            <person name="Fisher S."/>
            <person name="FitzGerald M."/>
            <person name="Foley K."/>
            <person name="Foley C."/>
            <person name="Franke A."/>
            <person name="Friedrich D."/>
            <person name="Gage D."/>
            <person name="Garber M."/>
            <person name="Gearin G."/>
            <person name="Giannoukos G."/>
            <person name="Goode T."/>
            <person name="Goyette A."/>
            <person name="Graham J."/>
            <person name="Grandbois E."/>
            <person name="Gyaltsen K."/>
            <person name="Hafez N."/>
            <person name="Hagopian D."/>
            <person name="Hagos B."/>
            <person name="Hall J."/>
            <person name="Healy C."/>
            <person name="Hegarty R."/>
            <person name="Honan T."/>
            <person name="Horn A."/>
            <person name="Houde N."/>
            <person name="Hughes L."/>
            <person name="Hunnicutt L."/>
            <person name="Husby M."/>
            <person name="Jester B."/>
            <person name="Jones C."/>
            <person name="Kamat A."/>
            <person name="Kanga B."/>
            <person name="Kells C."/>
            <person name="Khazanovich D."/>
            <person name="Kieu A.C."/>
            <person name="Kisner P."/>
            <person name="Kumar M."/>
            <person name="Lance K."/>
            <person name="Landers T."/>
            <person name="Lara M."/>
            <person name="Lee W."/>
            <person name="Leger J.-P."/>
            <person name="Lennon N."/>
            <person name="Leuper L."/>
            <person name="LeVine S."/>
            <person name="Liu J."/>
            <person name="Liu X."/>
            <person name="Lokyitsang Y."/>
            <person name="Lokyitsang T."/>
            <person name="Lui A."/>
            <person name="Macdonald J."/>
            <person name="Major J."/>
            <person name="Marabella R."/>
            <person name="Maru K."/>
            <person name="Matthews C."/>
            <person name="McDonough S."/>
            <person name="Mehta T."/>
            <person name="Meldrim J."/>
            <person name="Melnikov A."/>
            <person name="Meneus L."/>
            <person name="Mihalev A."/>
            <person name="Mihova T."/>
            <person name="Miller K."/>
            <person name="Mittelman R."/>
            <person name="Mlenga V."/>
            <person name="Mulrain L."/>
            <person name="Munson G."/>
            <person name="Navidi A."/>
            <person name="Naylor J."/>
            <person name="Nguyen T."/>
            <person name="Nguyen N."/>
            <person name="Nguyen C."/>
            <person name="Nguyen T."/>
            <person name="Nicol R."/>
            <person name="Norbu N."/>
            <person name="Norbu C."/>
            <person name="Novod N."/>
            <person name="Nyima T."/>
            <person name="Olandt P."/>
            <person name="O'Neill B."/>
            <person name="O'Neill K."/>
            <person name="Osman S."/>
            <person name="Oyono L."/>
            <person name="Patti C."/>
            <person name="Perrin D."/>
            <person name="Phunkhang P."/>
            <person name="Pierre F."/>
            <person name="Priest M."/>
            <person name="Rachupka A."/>
            <person name="Raghuraman S."/>
            <person name="Rameau R."/>
            <person name="Ray V."/>
            <person name="Raymond C."/>
            <person name="Rege F."/>
            <person name="Rise C."/>
            <person name="Rogers J."/>
            <person name="Rogov P."/>
            <person name="Sahalie J."/>
            <person name="Settipalli S."/>
            <person name="Sharpe T."/>
            <person name="Shea T."/>
            <person name="Sheehan M."/>
            <person name="Sherpa N."/>
            <person name="Shi J."/>
            <person name="Shih D."/>
            <person name="Sloan J."/>
            <person name="Smith C."/>
            <person name="Sparrow T."/>
            <person name="Stalker J."/>
            <person name="Stange-Thomann N."/>
            <person name="Stavropoulos S."/>
            <person name="Stone C."/>
            <person name="Stone S."/>
            <person name="Sykes S."/>
            <person name="Tchuinga P."/>
            <person name="Tenzing P."/>
            <person name="Tesfaye S."/>
            <person name="Thoulutsang D."/>
            <person name="Thoulutsang Y."/>
            <person name="Topham K."/>
            <person name="Topping I."/>
            <person name="Tsamla T."/>
            <person name="Vassiliev H."/>
            <person name="Venkataraman V."/>
            <person name="Vo A."/>
            <person name="Wangchuk T."/>
            <person name="Wangdi T."/>
            <person name="Weiand M."/>
            <person name="Wilkinson J."/>
            <person name="Wilson A."/>
            <person name="Yadav S."/>
            <person name="Yang S."/>
            <person name="Yang X."/>
            <person name="Young G."/>
            <person name="Yu Q."/>
            <person name="Zainoun J."/>
            <person name="Zembek L."/>
            <person name="Zimmer A."/>
            <person name="Lander E.S."/>
        </authorList>
    </citation>
    <scope>NUCLEOTIDE SEQUENCE [LARGE SCALE GENOMIC DNA]</scope>
    <source>
        <strain>Boxer</strain>
    </source>
</reference>
<reference key="3">
    <citation type="journal article" date="2000" name="Biochem. Biophys. Res. Commun.">
        <title>Identification of a novel beta-catenin-interacting protein.</title>
        <authorList>
            <person name="Kawajiri A."/>
            <person name="Itoh N."/>
            <person name="Fukata M."/>
            <person name="Nakagawa M."/>
            <person name="Yamaga M."/>
            <person name="Iwamatsu A."/>
            <person name="Kaibuchi K."/>
        </authorList>
    </citation>
    <scope>INTERACTION WITH RAPGEF2</scope>
    <scope>SUBCELLULAR LOCATION</scope>
</reference>
<reference key="4">
    <citation type="journal article" date="2021" name="Cell Chem. Biol.">
        <title>Scribble sub-cellular localization modulates recruitment of YES1 to regulate YAP1 phosphorylation.</title>
        <authorList>
            <person name="Zhao D."/>
            <person name="Yin Z."/>
            <person name="Soellner M.B."/>
            <person name="Martin B.R."/>
        </authorList>
    </citation>
    <scope>SUBCELLULAR LOCATION</scope>
</reference>
<comment type="function">
    <text evidence="2 3">Key downstream component of the canonical Wnt signaling pathway (By similarity). In the absence of Wnt, forms a complex with AXIN1, AXIN2, APC, CSNK1A1 and GSK3B that promotes phosphorylation on N-terminal Ser and Thr residues and ubiquitination of CTNNB1 via BTRC and its subsequent degradation by the proteasome. In the presence of Wnt ligand, CTNNB1 is not ubiquitinated and accumulates in the nucleus, where it acts as a coactivator for transcription factors of the TCF/LEF family, leading to activate Wnt responsive genes (By similarity). Also acts as a coactivator for other transcription factors, such as NR5A2 (By similarity). Promotes epithelial to mesenchymal transition/mesenchymal to epithelial transition (EMT/MET) via driving transcription of CTNNB1/TCF-target genes (By similarity). Involved in the regulation of cell adhesion, as component of an E-cadherin:catenin adhesion complex (By similarity). Acts as a negative regulator of centrosome cohesion. Involved in the CDK2/PTPN6/CTNNB1/CEACAM1 pathway of insulin internalization. Blocks anoikis of malignant kidney and intestinal epithelial cells and promotes their anchorage-independent growth by down-regulating DAPK2. Disrupts PML function and PML-NB formation by inhibiting RANBP2-mediated sumoylation of PML (By similarity). Promotes neurogenesis by maintaining sympathetic neuroblasts within the cell cycle. Involved in chondrocyte differentiation via interaction with SOX9: SOX9-binding competes with the binding sites of TCF/LEF within CTNNB1, thereby inhibiting the Wnt signaling (By similarity). Acts as a positive regulator of odontoblast differentiation during mesenchymal tooth germ formation, via promoting the transcription of differentiation factors such as LEF1, BMP2 and BMP4 (By similarity). Activity is repressed in a MSX1-mediated manner at the bell stage of mesenchymal tooth germ formation which prevents premature differentiation of odontoblasts (By similarity).</text>
</comment>
<comment type="subunit">
    <text evidence="2 3 6">Two separate complex-associated pools are found in the cytoplasm. The majority is present as part of an E-cadherin/ catenin adhesion complex composed of at least E-cadherin/CDH1 and beta-catenin/CTNNB1, and possibly alpha-catenin/CTNNA1; the complex is located to adherens junctions. The stable association of CTNNA1 is controversial as CTNNA1 was shown not to bind to F-actin when assembled in the complex. Alternatively, the CTNNA1-containing complex may be linked to F-actin by other proteins such as LIMA1. Binds NHERF1. Interacts with PTPRU (via the cytoplasmic juxtamembrane domain) and with EMD. Interacts with SESTD1 and TRPC4. Interacts with CAV1. Interacts with PTPRJ. Interacts with PKT7. Interacts with FAT1 (via the cytoplasmic domain). Interacts with CDK2, NDRG2 and NANOS1. Interacts with NEK2 and CDK5. Interacts with CARM1, CXADR, PCDH11Y and PTK6. Interacts with SOX7; this interaction may lead to proteasomal degradation of active CTNNB1 and thus inhibition of Wnt/beta-catenin-stimulated transcription. Identified in a complex with HINT1 and MITF. Interacts with FHIT. Interacts with FERMT2. Identified in a complex with TCF4 and FERMT2. Another cytoplasmic pool is part of a large complex containing AXIN1, AXIN2, APC, CSNK1A1 and GSK3B that promotes phosphorylation on N-terminal Ser and Thr residues and ubiquitination of CTNNB1 via BTRC and its subsequent degradation by the proteasome. Wnt-dependent activation of DVL antagonizes the action of GSK3B. When GSK3B activity is inhibited, the complex disassociates, CTNNB1 is dephosphorylated and is no longer targeted for destruction. The stabilized protein translocates to the nucleus, where it binds TCF/LEF-1 family members, BCL9, BCL9L and possibly also RUVBL1 and CHD8. Interacts with TAX1BP3 (via the PDZ domain); this interaction inhibits the transcriptional activity of CTNNB1. Interacts with AJAP1, BAIAP1 and CTNNA3. Interacts with TRPV4; the TRPV4 and CTNNB1 complex can interact with CDH1. Interacts with VCL. The CTNNB1 and TCF4 complex interacts with PML. Interacts with XIRP1. Binds CTNNBIP and EP300. CTNNB1 forms a ternary complex with LEF1 and EP300 that is disrupted by CTNNBIP1 binding. Interacts directly with AXIN1; the interaction is regulated by CDK2 phosphorylation of AXIN1. Interacts with GLIS2. Interacts with SCRIB. Interacts with TNIK and TCF7L2. Interacts with SLC30A9. Interacts with RORA. May interact with P-cadherin/CDH3 (By similarity). Interacts with RAPGEF2 (PubMed:10873669). Interacts with RNF220 (By similarity). Interacts with CTNND2 (By similarity). Interacts (via the C-terminal region) with CBY1 (By similarity). The complex composed, at least, of APC, CTNNB1 and GSK3B interacts with JPT1; the interaction requires the inactive form of GSK3B (phosphorylated at 'Ser-9'). Interacts with DLG5 (By similarity). Interacts with FAM53B; promoting translocation to the nucleus. Interacts with TMEM170B (By similarity). Interacts with AHI1 (By similarity). Interacts with GID8 (By similarity). Component of an cadherin:catenin adhesion complex composed of at least of CDH26, beta-catenin/CTNNB1, alpha-catenin/CTNNA1 and p120 catenin/CTNND1 (By similarity). Forms a complex comprising APPL1, RUVBL2, APPL2, HDAC1 and HDAC2 (By similarity). Interacts with IRF2BPL; mediates the ubiquitination and degradation of CTNNB1 (By similarity). Interacts with AMFR (By similarity). Interacts with LMBR1L (By similarity). Interacts with SOX30; prevents interaction of CTNNB1 with TCF7L2/TCF4 and leads to inhibition of Wnt signaling (By similarity). Interacts with SOX9; inhibiting CTNNB1 activity by competing with the binding sites of TCF/LEF within CTNNB1, thereby inhibiting the Wnt signaling (By similarity). Interacts with SPN/CD43 cytoplasmic tail (By similarity). Interacts (when phosphorylated at Tyr-333) with isoform M2 of PKM (PKM2); promoting transcription activation (By similarity). Interacts with PKP2 (via HEAD domain) (By similarity). Interacts with CDH1 (By similarity). Interacts (when unphosphorylated) with FLYWCH1, perhaps preventing interaction of CTNNB1 with TCF4, and thereby regulating transcription activation; phosphorylation of CTNNB1 may inhibit the interaction (By similarity). Interacts (via the central armadillo domains) with probable transcriptional regulator ADNP (via N-terminal region); interaction is direct and stabilizes CTNNB1 by modulating its phosphorylation by glycogen synthase kinase-3 beta GSK3B (By similarity). Interacts with NR5A2 (By similarity). Interacts with DSG2; the interaction promotes localization of CTNNB1 at cell junctions thus reducing its nuclear localization and subsequent transcription of CTNNB1/TCF-target genes (By similarity).</text>
</comment>
<comment type="subcellular location">
    <subcellularLocation>
        <location evidence="7">Cytoplasm</location>
    </subcellularLocation>
    <subcellularLocation>
        <location evidence="7">Nucleus</location>
    </subcellularLocation>
    <subcellularLocation>
        <location evidence="6">Cytoplasm</location>
        <location evidence="6">Cytoskeleton</location>
    </subcellularLocation>
    <subcellularLocation>
        <location evidence="3">Cell junction</location>
        <location evidence="3">Adherens junction</location>
    </subcellularLocation>
    <subcellularLocation>
        <location evidence="6">Cell junction</location>
    </subcellularLocation>
    <subcellularLocation>
        <location evidence="2">Cell membrane</location>
    </subcellularLocation>
    <subcellularLocation>
        <location evidence="2">Cytoplasm</location>
        <location evidence="2">Cytoskeleton</location>
        <location evidence="2">Microtubule organizing center</location>
        <location evidence="2">Centrosome</location>
    </subcellularLocation>
    <subcellularLocation>
        <location evidence="2">Cytoplasm</location>
        <location evidence="2">Cytoskeleton</location>
        <location evidence="2">Spindle pole</location>
    </subcellularLocation>
    <subcellularLocation>
        <location evidence="3">Synapse</location>
    </subcellularLocation>
    <subcellularLocation>
        <location evidence="3">Cytoplasm</location>
        <location evidence="3">Cytoskeleton</location>
        <location evidence="3">Cilium basal body</location>
    </subcellularLocation>
    <text evidence="2 3 6 7">Colocalized with RAPGEF2 and TJP1 at cell-cell contacts (PubMed:10873669). Cytoplasmic when it is un-stable (highly phosphorylated) or bound to CDH1 (By similarity). Translocates to the nucleus when it is stabilized (low level of phosphorylation) (By similarity). Interaction with GLIS2 and MUC1 promotes nuclear translocation (By similarity). Interaction with EMD inhibits nuclear localization (By similarity). The majority of CTNNB1 is localized to the cell membrane (By similarity). In interphase, colocalizes with CROCC between CEP250 puncta at the proximal end of centrioles, and this localization is dependent on CROCC and CEP250 (By similarity). In mitosis, when NEK2 activity increases, it localizes to centrosomes at spindle poles independent of CROCC (By similarity). Colocalizes with CDK5 in the cell-cell contacts and plasma membrane of undifferentiated and differentiated neuroblastoma cells (By similarity). Interaction with FAM53B promotes translocation to the nucleus (By similarity). Translocates to the nucleus in the presence of SNAIL1 (PubMed:33730553). Ca(2+)-mediated localization to the cell membrane in dental epithelial cells is inhibited via WNT3A (By similarity). Localizes to cell-cell contacts as keratinocyte differentiation progresses (By similarity).</text>
</comment>
<comment type="PTM">
    <text evidence="2 3">Phosphorylation by GSK3B requires prior phosphorylation of Ser-45 by another kinase. Phosphorylation proceeds then from Thr-41 to Ser-33. Phosphorylated by NEK2. EGF stimulates tyrosine phosphorylation. Phosphorylated on Ser-33 and Ser-37 by HIPK2. This phosphorylation triggers proteasomal degradation. Phosphorylation at Ser-552 by AMPK promotes stabilization of the protein, enhancing TCF/LEF-mediated transcription. Phosphorylation on Ser-191 and Ser-246 by CDK5. Phosphorylation by CDK2 regulates insulin internalization. Phosphorylation by PTK6 at Tyr-64, Tyr-142, Tyr-331 and/or Tyr-333 with the predominant site at Tyr-64 is not essential for inhibition of transcriptional activity. Phosphorylation by SRC at Tyr-333 promotes interaction with isoform M2 of PKM (PKM2); promoting transcription activation.</text>
</comment>
<comment type="PTM">
    <text evidence="2 3">Ubiquitinated by the SCF(BTRC) E3 ligase complex when phosphorylated by GSK3B, leading to its degradation. Ubiquitinated by a E3 ubiquitin ligase complex containing UBE2D1, SIAH1, CACYBP/SIP, SKP1, APC and TBL1X, leading to its subsequent proteasomal degradation (By similarity). Ubiquitinated and degraded following interaction with SOX9 (By similarity). Ubiquitinated via 'Lys-11'- and 'Lys-29'-linked ubiquitin chains by UBR5, leading to its stabilization (By similarity).</text>
</comment>
<comment type="PTM">
    <text evidence="1">S-nitrosylation at Cys-619 within adherens junctions promotes VEGF-induced, NO-dependent endothelial cell permeability by disrupting interaction with E-cadherin, thus mediating disassembly adherens junctions.</text>
</comment>
<comment type="PTM">
    <text evidence="4">O-glycosylation at Ser-23 decreases nuclear localization and transcriptional activity, and increases localization to the plasma membrane and interaction with E-cadherin CDH1.</text>
</comment>
<comment type="PTM">
    <text evidence="2">Deacetylated at Lys-49 by SIRT1.</text>
</comment>
<comment type="similarity">
    <text evidence="9">Belongs to the beta-catenin family.</text>
</comment>
<accession>B6V8E6</accession>
<feature type="initiator methionine" description="Removed" evidence="2">
    <location>
        <position position="1"/>
    </location>
</feature>
<feature type="chain" id="PRO_0000423871" description="Catenin beta-1">
    <location>
        <begin position="2"/>
        <end position="781"/>
    </location>
</feature>
<feature type="repeat" description="ARM 1">
    <location>
        <begin position="141"/>
        <end position="180"/>
    </location>
</feature>
<feature type="repeat" description="ARM 2">
    <location>
        <begin position="181"/>
        <end position="223"/>
    </location>
</feature>
<feature type="repeat" description="ARM 3">
    <location>
        <begin position="224"/>
        <end position="264"/>
    </location>
</feature>
<feature type="repeat" description="ARM 4">
    <location>
        <begin position="265"/>
        <end position="306"/>
    </location>
</feature>
<feature type="repeat" description="ARM 5">
    <location>
        <begin position="308"/>
        <end position="349"/>
    </location>
</feature>
<feature type="repeat" description="ARM 6">
    <location>
        <begin position="350"/>
        <end position="390"/>
    </location>
</feature>
<feature type="repeat" description="ARM 7">
    <location>
        <begin position="392"/>
        <end position="429"/>
    </location>
</feature>
<feature type="repeat" description="ARM 8">
    <location>
        <begin position="430"/>
        <end position="473"/>
    </location>
</feature>
<feature type="repeat" description="ARM 9">
    <location>
        <begin position="478"/>
        <end position="519"/>
    </location>
</feature>
<feature type="repeat" description="ARM 10">
    <location>
        <begin position="520"/>
        <end position="582"/>
    </location>
</feature>
<feature type="repeat" description="ARM 11">
    <location>
        <begin position="583"/>
        <end position="623"/>
    </location>
</feature>
<feature type="repeat" description="ARM 12">
    <location>
        <begin position="624"/>
        <end position="664"/>
    </location>
</feature>
<feature type="region of interest" description="Interaction with VCL" evidence="1">
    <location>
        <begin position="2"/>
        <end position="23"/>
    </location>
</feature>
<feature type="region of interest" description="Disordered" evidence="5">
    <location>
        <begin position="34"/>
        <end position="56"/>
    </location>
</feature>
<feature type="region of interest" description="Interaction with BCL9" evidence="1">
    <location>
        <begin position="156"/>
        <end position="178"/>
    </location>
</feature>
<feature type="region of interest" description="Disordered" evidence="5">
    <location>
        <begin position="705"/>
        <end position="781"/>
    </location>
</feature>
<feature type="region of interest" description="Interaction with SCRIB" evidence="1">
    <location>
        <begin position="772"/>
        <end position="781"/>
    </location>
</feature>
<feature type="compositionally biased region" description="Basic and acidic residues" evidence="5">
    <location>
        <begin position="734"/>
        <end position="745"/>
    </location>
</feature>
<feature type="modified residue" description="N-acetylalanine" evidence="2">
    <location>
        <position position="2"/>
    </location>
</feature>
<feature type="modified residue" description="Phosphoserine; by GSK3-beta; alternate" evidence="2">
    <location>
        <position position="23"/>
    </location>
</feature>
<feature type="modified residue" description="Phosphoserine; by GSK3-beta" evidence="2">
    <location>
        <position position="29"/>
    </location>
</feature>
<feature type="modified residue" description="Phosphoserine; by GSK3-beta and HIPK2" evidence="2">
    <location>
        <position position="33"/>
    </location>
</feature>
<feature type="modified residue" description="Phosphoserine; by GSK3-beta and HIPK2" evidence="2">
    <location>
        <position position="37"/>
    </location>
</feature>
<feature type="modified residue" description="Phosphothreonine; by GSK3-beta" evidence="2">
    <location>
        <position position="41"/>
    </location>
</feature>
<feature type="modified residue" description="Phosphoserine" evidence="2">
    <location>
        <position position="45"/>
    </location>
</feature>
<feature type="modified residue" description="N6-acetyllysine" evidence="2">
    <location>
        <position position="49"/>
    </location>
</feature>
<feature type="modified residue" description="Phosphotyrosine; by PTK6" evidence="2">
    <location>
        <position position="64"/>
    </location>
</feature>
<feature type="modified residue" description="Phosphotyrosine; by FYN and PTK6" evidence="2">
    <location>
        <position position="142"/>
    </location>
</feature>
<feature type="modified residue" description="Phosphoserine; by CDK5" evidence="2">
    <location>
        <position position="191"/>
    </location>
</feature>
<feature type="modified residue" description="Phosphoserine; by CDK5" evidence="2">
    <location>
        <position position="246"/>
    </location>
</feature>
<feature type="modified residue" description="Phosphotyrosine" evidence="2">
    <location>
        <position position="331"/>
    </location>
</feature>
<feature type="modified residue" description="Phosphotyrosine" evidence="2">
    <location>
        <position position="333"/>
    </location>
</feature>
<feature type="modified residue" description="Phosphoserine; by AMPK" evidence="3">
    <location>
        <position position="552"/>
    </location>
</feature>
<feature type="modified residue" description="Phosphothreonine" evidence="2">
    <location>
        <position position="556"/>
    </location>
</feature>
<feature type="modified residue" description="S-nitrosocysteine" evidence="3">
    <location>
        <position position="619"/>
    </location>
</feature>
<feature type="modified residue" description="Phosphoserine" evidence="2">
    <location>
        <position position="675"/>
    </location>
</feature>
<feature type="glycosylation site" description="O-linked (GlcNAc) serine; alternate" evidence="4">
    <location>
        <position position="23"/>
    </location>
</feature>
<gene>
    <name evidence="3" type="primary">CTNNB1</name>
</gene>
<keyword id="KW-0007">Acetylation</keyword>
<keyword id="KW-0010">Activator</keyword>
<keyword id="KW-0130">Cell adhesion</keyword>
<keyword id="KW-0965">Cell junction</keyword>
<keyword id="KW-1003">Cell membrane</keyword>
<keyword id="KW-0966">Cell projection</keyword>
<keyword id="KW-0963">Cytoplasm</keyword>
<keyword id="KW-0206">Cytoskeleton</keyword>
<keyword id="KW-0325">Glycoprotein</keyword>
<keyword id="KW-0472">Membrane</keyword>
<keyword id="KW-0524">Neurogenesis</keyword>
<keyword id="KW-0539">Nucleus</keyword>
<keyword id="KW-0597">Phosphoprotein</keyword>
<keyword id="KW-1185">Reference proteome</keyword>
<keyword id="KW-0677">Repeat</keyword>
<keyword id="KW-0702">S-nitrosylation</keyword>
<keyword id="KW-0770">Synapse</keyword>
<keyword id="KW-0804">Transcription</keyword>
<keyword id="KW-0805">Transcription regulation</keyword>
<keyword id="KW-0832">Ubl conjugation</keyword>
<keyword id="KW-0879">Wnt signaling pathway</keyword>
<evidence type="ECO:0000250" key="1"/>
<evidence type="ECO:0000250" key="2">
    <source>
        <dbReference type="UniProtKB" id="P35222"/>
    </source>
</evidence>
<evidence type="ECO:0000250" key="3">
    <source>
        <dbReference type="UniProtKB" id="Q02248"/>
    </source>
</evidence>
<evidence type="ECO:0000250" key="4">
    <source>
        <dbReference type="UniProtKB" id="Q96S06"/>
    </source>
</evidence>
<evidence type="ECO:0000256" key="5">
    <source>
        <dbReference type="SAM" id="MobiDB-lite"/>
    </source>
</evidence>
<evidence type="ECO:0000269" key="6">
    <source>
    </source>
</evidence>
<evidence type="ECO:0000269" key="7">
    <source>
    </source>
</evidence>
<evidence type="ECO:0000303" key="8">
    <source>
    </source>
</evidence>
<evidence type="ECO:0000305" key="9"/>
<sequence>MATQADLMELDMAMEPDRKAAVSHWQQQSYLDSGIHSGATTTAPSLSGKGNPEEEDVDTTQVLYEWEQGFSQSFTQEQVADIDGQYAMTRAQRVRAAMFPETLDEGMQIPSTQFDAAHPTNVQRLAEPSQMLKHAVVNLINYQDDAELATRAIPELTKLLNDEDQVVVNKAAVMVHQLSKKEASRHAIMRSPQMVSAIVRTMQNTNDVETARCTAGTLHNLSHHREGLLAIFKSGGIPALVKMLGSPVDSVLFYAITTLHNLLLHQEGAKMAVRLAGGLQKMVALLNKTNVKFLAITTDCLQILAYGNQESKLIILASGGPQALVNIMRTYTYEKLLWTTSRVLKVLSVCSSNKPAIVEAGGMQALGLHLTDPSQRLVQNCLWTLRNLSDAATKQEGMEGLLGTLVQLLGSDDINVVTCAAGILSNLTCNNYKNKMMVCQVGGIEALVRTVLRAGDREDITEPAICALRHLTSRHQEAEMAQNAVRLHYGLPVVVKLLHPPSHWPLIKATVGLIRNLALCPANHAPLREQGAIPRLVQLLVRAHQDTQRRTSMGGTQQQFVEGVRMEEIVEGCTGALHILARDVHNRIVIRGLNTIPLFVQLLYSPIENIQRVAAGVLCELAQDKEAAEAIEAEGATAPLTELLHSRNEGVATYAAAVLFRMSEDKPQDYKKRLSVELTSSLFRTEPMAWNETADLGLDIGAQGEPLGYRQDDPSYRSFHSGGYGQDALGMDPMMEHEMGGHHPGADYPVDGLPDLGHAQDLMDGLPPGDSNQLAWFDTDL</sequence>
<name>CTNB1_CANLF</name>
<dbReference type="EMBL" id="FJ268743">
    <property type="protein sequence ID" value="ACJ04159.1"/>
    <property type="molecule type" value="mRNA"/>
</dbReference>
<dbReference type="EMBL" id="AAEX03013510">
    <property type="status" value="NOT_ANNOTATED_CDS"/>
    <property type="molecule type" value="Genomic_DNA"/>
</dbReference>
<dbReference type="RefSeq" id="NP_001131124.1">
    <property type="nucleotide sequence ID" value="NM_001137652.1"/>
</dbReference>
<dbReference type="RefSeq" id="XP_013961954.1">
    <property type="nucleotide sequence ID" value="XM_014106479.1"/>
</dbReference>
<dbReference type="RefSeq" id="XP_013961955.1">
    <property type="nucleotide sequence ID" value="XM_014106480.1"/>
</dbReference>
<dbReference type="RefSeq" id="XP_038287524.1">
    <property type="nucleotide sequence ID" value="XM_038431596.1"/>
</dbReference>
<dbReference type="RefSeq" id="XP_038287525.1">
    <property type="nucleotide sequence ID" value="XM_038431597.1"/>
</dbReference>
<dbReference type="RefSeq" id="XP_038287526.1">
    <property type="nucleotide sequence ID" value="XM_038431598.1"/>
</dbReference>
<dbReference type="SMR" id="B6V8E6"/>
<dbReference type="BioGRID" id="142757">
    <property type="interactions" value="1"/>
</dbReference>
<dbReference type="CORUM" id="B6V8E6"/>
<dbReference type="FunCoup" id="B6V8E6">
    <property type="interactions" value="2340"/>
</dbReference>
<dbReference type="IntAct" id="B6V8E6">
    <property type="interactions" value="7"/>
</dbReference>
<dbReference type="MINT" id="B6V8E6"/>
<dbReference type="STRING" id="9615.ENSCAFP00000007783"/>
<dbReference type="GlyCosmos" id="B6V8E6">
    <property type="glycosylation" value="1 site, No reported glycans"/>
</dbReference>
<dbReference type="iPTMnet" id="B6V8E6"/>
<dbReference type="PaxDb" id="9612-ENSCAFP00000007783"/>
<dbReference type="GeneID" id="477032"/>
<dbReference type="KEGG" id="cfa:477032"/>
<dbReference type="CTD" id="1499"/>
<dbReference type="eggNOG" id="KOG4203">
    <property type="taxonomic scope" value="Eukaryota"/>
</dbReference>
<dbReference type="HOGENOM" id="CLU_008757_1_1_1"/>
<dbReference type="InParanoid" id="B6V8E6"/>
<dbReference type="OMA" id="YPKLVYT"/>
<dbReference type="OrthoDB" id="195736at2759"/>
<dbReference type="TreeFam" id="TF317997"/>
<dbReference type="Proteomes" id="UP000002254">
    <property type="component" value="Unplaced"/>
</dbReference>
<dbReference type="Proteomes" id="UP000694429">
    <property type="component" value="Unplaced"/>
</dbReference>
<dbReference type="Proteomes" id="UP000694542">
    <property type="component" value="Unplaced"/>
</dbReference>
<dbReference type="Proteomes" id="UP000805418">
    <property type="component" value="Unplaced"/>
</dbReference>
<dbReference type="GO" id="GO:0005912">
    <property type="term" value="C:adherens junction"/>
    <property type="evidence" value="ECO:0000250"/>
    <property type="project" value="UniProtKB"/>
</dbReference>
<dbReference type="GO" id="GO:0030877">
    <property type="term" value="C:beta-catenin destruction complex"/>
    <property type="evidence" value="ECO:0000250"/>
    <property type="project" value="UniProtKB"/>
</dbReference>
<dbReference type="GO" id="GO:0070369">
    <property type="term" value="C:beta-catenin-TCF7L2 complex"/>
    <property type="evidence" value="ECO:0000250"/>
    <property type="project" value="UniProtKB"/>
</dbReference>
<dbReference type="GO" id="GO:0016342">
    <property type="term" value="C:catenin complex"/>
    <property type="evidence" value="ECO:0000250"/>
    <property type="project" value="UniProtKB"/>
</dbReference>
<dbReference type="GO" id="GO:0005938">
    <property type="term" value="C:cell cortex"/>
    <property type="evidence" value="ECO:0000250"/>
    <property type="project" value="UniProtKB"/>
</dbReference>
<dbReference type="GO" id="GO:0030054">
    <property type="term" value="C:cell junction"/>
    <property type="evidence" value="ECO:0000250"/>
    <property type="project" value="UniProtKB"/>
</dbReference>
<dbReference type="GO" id="GO:0071944">
    <property type="term" value="C:cell periphery"/>
    <property type="evidence" value="ECO:0000250"/>
    <property type="project" value="UniProtKB"/>
</dbReference>
<dbReference type="GO" id="GO:0042995">
    <property type="term" value="C:cell projection"/>
    <property type="evidence" value="ECO:0007669"/>
    <property type="project" value="UniProtKB-KW"/>
</dbReference>
<dbReference type="GO" id="GO:0005911">
    <property type="term" value="C:cell-cell junction"/>
    <property type="evidence" value="ECO:0000314"/>
    <property type="project" value="UniProtKB"/>
</dbReference>
<dbReference type="GO" id="GO:0005813">
    <property type="term" value="C:centrosome"/>
    <property type="evidence" value="ECO:0000250"/>
    <property type="project" value="UniProtKB"/>
</dbReference>
<dbReference type="GO" id="GO:0005737">
    <property type="term" value="C:cytoplasm"/>
    <property type="evidence" value="ECO:0000250"/>
    <property type="project" value="UniProtKB"/>
</dbReference>
<dbReference type="GO" id="GO:0005829">
    <property type="term" value="C:cytosol"/>
    <property type="evidence" value="ECO:0000250"/>
    <property type="project" value="UniProtKB"/>
</dbReference>
<dbReference type="GO" id="GO:0070382">
    <property type="term" value="C:exocytic vesicle"/>
    <property type="evidence" value="ECO:0000314"/>
    <property type="project" value="CAFA"/>
</dbReference>
<dbReference type="GO" id="GO:0005634">
    <property type="term" value="C:nucleus"/>
    <property type="evidence" value="ECO:0000314"/>
    <property type="project" value="UniProtKB"/>
</dbReference>
<dbReference type="GO" id="GO:0048471">
    <property type="term" value="C:perinuclear region of cytoplasm"/>
    <property type="evidence" value="ECO:0000250"/>
    <property type="project" value="UniProtKB"/>
</dbReference>
<dbReference type="GO" id="GO:0005886">
    <property type="term" value="C:plasma membrane"/>
    <property type="evidence" value="ECO:0000314"/>
    <property type="project" value="UniProtKB"/>
</dbReference>
<dbReference type="GO" id="GO:0032993">
    <property type="term" value="C:protein-DNA complex"/>
    <property type="evidence" value="ECO:0000250"/>
    <property type="project" value="UniProtKB"/>
</dbReference>
<dbReference type="GO" id="GO:0000922">
    <property type="term" value="C:spindle pole"/>
    <property type="evidence" value="ECO:0007669"/>
    <property type="project" value="UniProtKB-SubCell"/>
</dbReference>
<dbReference type="GO" id="GO:0045202">
    <property type="term" value="C:synapse"/>
    <property type="evidence" value="ECO:0000250"/>
    <property type="project" value="UniProtKB"/>
</dbReference>
<dbReference type="GO" id="GO:0005667">
    <property type="term" value="C:transcription regulator complex"/>
    <property type="evidence" value="ECO:0000250"/>
    <property type="project" value="UniProtKB"/>
</dbReference>
<dbReference type="GO" id="GO:0045294">
    <property type="term" value="F:alpha-catenin binding"/>
    <property type="evidence" value="ECO:0000318"/>
    <property type="project" value="GO_Central"/>
</dbReference>
<dbReference type="GO" id="GO:0045296">
    <property type="term" value="F:cadherin binding"/>
    <property type="evidence" value="ECO:0000318"/>
    <property type="project" value="GO_Central"/>
</dbReference>
<dbReference type="GO" id="GO:0016922">
    <property type="term" value="F:nuclear receptor binding"/>
    <property type="evidence" value="ECO:0000318"/>
    <property type="project" value="GO_Central"/>
</dbReference>
<dbReference type="GO" id="GO:0019903">
    <property type="term" value="F:protein phosphatase binding"/>
    <property type="evidence" value="ECO:0000318"/>
    <property type="project" value="GO_Central"/>
</dbReference>
<dbReference type="GO" id="GO:0061629">
    <property type="term" value="F:RNA polymerase II-specific DNA-binding transcription factor binding"/>
    <property type="evidence" value="ECO:0000250"/>
    <property type="project" value="UniProtKB"/>
</dbReference>
<dbReference type="GO" id="GO:0003713">
    <property type="term" value="F:transcription coactivator activity"/>
    <property type="evidence" value="ECO:0000250"/>
    <property type="project" value="UniProtKB"/>
</dbReference>
<dbReference type="GO" id="GO:0034333">
    <property type="term" value="P:adherens junction assembly"/>
    <property type="evidence" value="ECO:0000250"/>
    <property type="project" value="UniProtKB"/>
</dbReference>
<dbReference type="GO" id="GO:0070830">
    <property type="term" value="P:bicellular tight junction assembly"/>
    <property type="evidence" value="ECO:0000314"/>
    <property type="project" value="UniProtKB"/>
</dbReference>
<dbReference type="GO" id="GO:0060070">
    <property type="term" value="P:canonical Wnt signaling pathway"/>
    <property type="evidence" value="ECO:0000250"/>
    <property type="project" value="UniProtKB"/>
</dbReference>
<dbReference type="GO" id="GO:0007155">
    <property type="term" value="P:cell adhesion"/>
    <property type="evidence" value="ECO:0000250"/>
    <property type="project" value="UniProtKB"/>
</dbReference>
<dbReference type="GO" id="GO:0098609">
    <property type="term" value="P:cell-cell adhesion"/>
    <property type="evidence" value="ECO:0000318"/>
    <property type="project" value="GO_Central"/>
</dbReference>
<dbReference type="GO" id="GO:0044331">
    <property type="term" value="P:cell-cell adhesion mediated by cadherin"/>
    <property type="evidence" value="ECO:0000250"/>
    <property type="project" value="UniProtKB"/>
</dbReference>
<dbReference type="GO" id="GO:0071363">
    <property type="term" value="P:cellular response to growth factor stimulus"/>
    <property type="evidence" value="ECO:0000250"/>
    <property type="project" value="UniProtKB"/>
</dbReference>
<dbReference type="GO" id="GO:0071681">
    <property type="term" value="P:cellular response to indole-3-methanol"/>
    <property type="evidence" value="ECO:0000250"/>
    <property type="project" value="UniProtKB"/>
</dbReference>
<dbReference type="GO" id="GO:0061154">
    <property type="term" value="P:endothelial tube morphogenesis"/>
    <property type="evidence" value="ECO:0000250"/>
    <property type="project" value="UniProtKB"/>
</dbReference>
<dbReference type="GO" id="GO:0060231">
    <property type="term" value="P:mesenchymal to epithelial transition"/>
    <property type="evidence" value="ECO:0000250"/>
    <property type="project" value="UniProtKB"/>
</dbReference>
<dbReference type="GO" id="GO:0008285">
    <property type="term" value="P:negative regulation of cell population proliferation"/>
    <property type="evidence" value="ECO:0000250"/>
    <property type="project" value="UniProtKB"/>
</dbReference>
<dbReference type="GO" id="GO:0045892">
    <property type="term" value="P:negative regulation of DNA-templated transcription"/>
    <property type="evidence" value="ECO:0000250"/>
    <property type="project" value="UniProtKB"/>
</dbReference>
<dbReference type="GO" id="GO:0045976">
    <property type="term" value="P:negative regulation of mitotic cell cycle, embryonic"/>
    <property type="evidence" value="ECO:0000250"/>
    <property type="project" value="UniProtKB"/>
</dbReference>
<dbReference type="GO" id="GO:1990138">
    <property type="term" value="P:neuron projection extension"/>
    <property type="evidence" value="ECO:0000250"/>
    <property type="project" value="UniProtKB"/>
</dbReference>
<dbReference type="GO" id="GO:0043065">
    <property type="term" value="P:positive regulation of apoptotic process"/>
    <property type="evidence" value="ECO:0000250"/>
    <property type="project" value="UniProtKB"/>
</dbReference>
<dbReference type="GO" id="GO:0045893">
    <property type="term" value="P:positive regulation of DNA-templated transcription"/>
    <property type="evidence" value="ECO:0000250"/>
    <property type="project" value="UniProtKB"/>
</dbReference>
<dbReference type="GO" id="GO:0010909">
    <property type="term" value="P:positive regulation of heparan sulfate proteoglycan biosynthetic process"/>
    <property type="evidence" value="ECO:0000250"/>
    <property type="project" value="UniProtKB"/>
</dbReference>
<dbReference type="GO" id="GO:0002052">
    <property type="term" value="P:positive regulation of neuroblast proliferation"/>
    <property type="evidence" value="ECO:0000250"/>
    <property type="project" value="UniProtKB"/>
</dbReference>
<dbReference type="GO" id="GO:0045944">
    <property type="term" value="P:positive regulation of transcription by RNA polymerase II"/>
    <property type="evidence" value="ECO:0000250"/>
    <property type="project" value="UniProtKB"/>
</dbReference>
<dbReference type="GO" id="GO:0034394">
    <property type="term" value="P:protein localization to cell surface"/>
    <property type="evidence" value="ECO:0000250"/>
    <property type="project" value="UniProtKB"/>
</dbReference>
<dbReference type="GO" id="GO:0090279">
    <property type="term" value="P:regulation of calcium ion import"/>
    <property type="evidence" value="ECO:0000250"/>
    <property type="project" value="UniProtKB"/>
</dbReference>
<dbReference type="GO" id="GO:0030997">
    <property type="term" value="P:regulation of centriole-centriole cohesion"/>
    <property type="evidence" value="ECO:0000250"/>
    <property type="project" value="UniProtKB"/>
</dbReference>
<dbReference type="GO" id="GO:0070602">
    <property type="term" value="P:regulation of centromeric sister chromatid cohesion"/>
    <property type="evidence" value="ECO:0000250"/>
    <property type="project" value="UniProtKB"/>
</dbReference>
<dbReference type="GO" id="GO:0010717">
    <property type="term" value="P:regulation of epithelial to mesenchymal transition"/>
    <property type="evidence" value="ECO:0000250"/>
    <property type="project" value="UniProtKB"/>
</dbReference>
<dbReference type="GO" id="GO:2000008">
    <property type="term" value="P:regulation of protein localization to cell surface"/>
    <property type="evidence" value="ECO:0000250"/>
    <property type="project" value="UniProtKB"/>
</dbReference>
<dbReference type="GO" id="GO:0048660">
    <property type="term" value="P:regulation of smooth muscle cell proliferation"/>
    <property type="evidence" value="ECO:0000250"/>
    <property type="project" value="UniProtKB"/>
</dbReference>
<dbReference type="GO" id="GO:0032355">
    <property type="term" value="P:response to estradiol"/>
    <property type="evidence" value="ECO:0000250"/>
    <property type="project" value="UniProtKB"/>
</dbReference>
<dbReference type="GO" id="GO:0061549">
    <property type="term" value="P:sympathetic ganglion development"/>
    <property type="evidence" value="ECO:0000250"/>
    <property type="project" value="UniProtKB"/>
</dbReference>
<dbReference type="CDD" id="cd21724">
    <property type="entry name" value="CTNNAbd_CTNNB1"/>
    <property type="match status" value="1"/>
</dbReference>
<dbReference type="FunFam" id="1.25.10.10:FF:000015">
    <property type="entry name" value="Catenin beta-1"/>
    <property type="match status" value="1"/>
</dbReference>
<dbReference type="Gene3D" id="1.25.10.10">
    <property type="entry name" value="Leucine-rich Repeat Variant"/>
    <property type="match status" value="1"/>
</dbReference>
<dbReference type="InterPro" id="IPR011989">
    <property type="entry name" value="ARM-like"/>
</dbReference>
<dbReference type="InterPro" id="IPR016024">
    <property type="entry name" value="ARM-type_fold"/>
</dbReference>
<dbReference type="InterPro" id="IPR000225">
    <property type="entry name" value="Armadillo"/>
</dbReference>
<dbReference type="InterPro" id="IPR013284">
    <property type="entry name" value="Beta-catenin"/>
</dbReference>
<dbReference type="PANTHER" id="PTHR45976">
    <property type="entry name" value="ARMADILLO SEGMENT POLARITY PROTEIN"/>
    <property type="match status" value="1"/>
</dbReference>
<dbReference type="Pfam" id="PF00514">
    <property type="entry name" value="Arm"/>
    <property type="match status" value="4"/>
</dbReference>
<dbReference type="PRINTS" id="PR01869">
    <property type="entry name" value="BCATNINFAMLY"/>
</dbReference>
<dbReference type="SMART" id="SM00185">
    <property type="entry name" value="ARM"/>
    <property type="match status" value="12"/>
</dbReference>
<dbReference type="SUPFAM" id="SSF48371">
    <property type="entry name" value="ARM repeat"/>
    <property type="match status" value="1"/>
</dbReference>
<dbReference type="PROSITE" id="PS50176">
    <property type="entry name" value="ARM_REPEAT"/>
    <property type="match status" value="9"/>
</dbReference>
<protein>
    <recommendedName>
        <fullName evidence="3">Catenin beta-1</fullName>
    </recommendedName>
    <alternativeName>
        <fullName evidence="8">Beta-catenin</fullName>
    </alternativeName>
</protein>
<organism>
    <name type="scientific">Canis lupus familiaris</name>
    <name type="common">Dog</name>
    <name type="synonym">Canis familiaris</name>
    <dbReference type="NCBI Taxonomy" id="9615"/>
    <lineage>
        <taxon>Eukaryota</taxon>
        <taxon>Metazoa</taxon>
        <taxon>Chordata</taxon>
        <taxon>Craniata</taxon>
        <taxon>Vertebrata</taxon>
        <taxon>Euteleostomi</taxon>
        <taxon>Mammalia</taxon>
        <taxon>Eutheria</taxon>
        <taxon>Laurasiatheria</taxon>
        <taxon>Carnivora</taxon>
        <taxon>Caniformia</taxon>
        <taxon>Canidae</taxon>
        <taxon>Canis</taxon>
    </lineage>
</organism>
<proteinExistence type="evidence at protein level"/>